<dbReference type="EMBL" id="CP000305">
    <property type="protein sequence ID" value="ABG17619.1"/>
    <property type="molecule type" value="Genomic_DNA"/>
</dbReference>
<dbReference type="EMBL" id="ACNQ01000008">
    <property type="protein sequence ID" value="EEO77734.1"/>
    <property type="molecule type" value="Genomic_DNA"/>
</dbReference>
<dbReference type="RefSeq" id="WP_002209794.1">
    <property type="nucleotide sequence ID" value="NZ_ACNQ01000008.1"/>
</dbReference>
<dbReference type="SMR" id="Q1CK61"/>
<dbReference type="GeneID" id="57975807"/>
<dbReference type="KEGG" id="ypn:YPN_1289"/>
<dbReference type="HOGENOM" id="CLU_002755_1_2_6"/>
<dbReference type="Proteomes" id="UP000008936">
    <property type="component" value="Chromosome"/>
</dbReference>
<dbReference type="GO" id="GO:0005886">
    <property type="term" value="C:plasma membrane"/>
    <property type="evidence" value="ECO:0007669"/>
    <property type="project" value="UniProtKB-SubCell"/>
</dbReference>
<dbReference type="GO" id="GO:0042910">
    <property type="term" value="F:xenobiotic transmembrane transporter activity"/>
    <property type="evidence" value="ECO:0007669"/>
    <property type="project" value="TreeGrafter"/>
</dbReference>
<dbReference type="FunFam" id="1.20.1640.10:FF:000001">
    <property type="entry name" value="Efflux pump membrane transporter"/>
    <property type="match status" value="1"/>
</dbReference>
<dbReference type="FunFam" id="3.30.70.1430:FF:000001">
    <property type="entry name" value="Efflux pump membrane transporter"/>
    <property type="match status" value="1"/>
</dbReference>
<dbReference type="FunFam" id="3.30.2090.10:FF:000004">
    <property type="entry name" value="Multidrug resistance protein MdtC"/>
    <property type="match status" value="1"/>
</dbReference>
<dbReference type="Gene3D" id="3.30.70.1430">
    <property type="entry name" value="Multidrug efflux transporter AcrB pore domain"/>
    <property type="match status" value="2"/>
</dbReference>
<dbReference type="Gene3D" id="3.30.70.1440">
    <property type="entry name" value="Multidrug efflux transporter AcrB pore domain"/>
    <property type="match status" value="1"/>
</dbReference>
<dbReference type="Gene3D" id="3.30.70.1320">
    <property type="entry name" value="Multidrug efflux transporter AcrB pore domain like"/>
    <property type="match status" value="1"/>
</dbReference>
<dbReference type="Gene3D" id="3.30.2090.10">
    <property type="entry name" value="Multidrug efflux transporter AcrB TolC docking domain, DN and DC subdomains"/>
    <property type="match status" value="2"/>
</dbReference>
<dbReference type="Gene3D" id="1.20.1640.10">
    <property type="entry name" value="Multidrug efflux transporter AcrB transmembrane domain"/>
    <property type="match status" value="2"/>
</dbReference>
<dbReference type="HAMAP" id="MF_01424">
    <property type="entry name" value="MdtC"/>
    <property type="match status" value="1"/>
</dbReference>
<dbReference type="InterPro" id="IPR027463">
    <property type="entry name" value="AcrB_DN_DC_subdom"/>
</dbReference>
<dbReference type="InterPro" id="IPR001036">
    <property type="entry name" value="Acrflvin-R"/>
</dbReference>
<dbReference type="InterPro" id="IPR023931">
    <property type="entry name" value="Multidrug-R_MdtC"/>
</dbReference>
<dbReference type="NCBIfam" id="NF007905">
    <property type="entry name" value="PRK10614.1"/>
    <property type="match status" value="1"/>
</dbReference>
<dbReference type="NCBIfam" id="NF033617">
    <property type="entry name" value="RND_permease_2"/>
    <property type="match status" value="1"/>
</dbReference>
<dbReference type="PANTHER" id="PTHR32063">
    <property type="match status" value="1"/>
</dbReference>
<dbReference type="PANTHER" id="PTHR32063:SF34">
    <property type="entry name" value="MULTIDRUG RESISTANCE PROTEIN MDTC"/>
    <property type="match status" value="1"/>
</dbReference>
<dbReference type="Pfam" id="PF00873">
    <property type="entry name" value="ACR_tran"/>
    <property type="match status" value="1"/>
</dbReference>
<dbReference type="PRINTS" id="PR00702">
    <property type="entry name" value="ACRIFLAVINRP"/>
</dbReference>
<dbReference type="SUPFAM" id="SSF82693">
    <property type="entry name" value="Multidrug efflux transporter AcrB pore domain, PN1, PN2, PC1 and PC2 subdomains"/>
    <property type="match status" value="4"/>
</dbReference>
<dbReference type="SUPFAM" id="SSF82714">
    <property type="entry name" value="Multidrug efflux transporter AcrB TolC docking domain, DN and DC subdomains"/>
    <property type="match status" value="2"/>
</dbReference>
<dbReference type="SUPFAM" id="SSF82866">
    <property type="entry name" value="Multidrug efflux transporter AcrB transmembrane domain"/>
    <property type="match status" value="2"/>
</dbReference>
<proteinExistence type="inferred from homology"/>
<name>MDTC_YERPN</name>
<sequence>MKFFALFIQRPVATTLLTLAITLSGIIGFSLLPVSPLPQVDYPVIMVSASMPGADPETMASSVATPLERALGRIAGVNEMTSTSSLGSTRIILQFDLNRDINGAARDVQAALNAAQSLLPSGMPSRPTYRKMNPSDAPIMIMTLTSDTFSQGQLYDYASTKLAQKIAQTEGVSDVTVGGSSLPAVRVELNPSALFNQGVSLDAVRQAISAANVRRPQGSVDAAETHWQVQANDEIKTAEGYRPLIVHYNNGSPVRLQDVANVIDSVQDVRNAGMSAGQPAVLLVISREPGANIIATVDRIRAELPALRASIPASIQLNIAQDRSPTIRASLDEVERSLVIAVALVILVVFIFLRSGRATLIPAVAVPVSLIGTFAAMYLCGFSLNNLSLMALTIATGFVVDDAIVVLENISRHLEAGVKPKVAALRGVREVGFTVLSMSISLVAVFIPLLLMAGLPGRLFREFAVTLSVAIGISLVISLTLTPMMCAWLLRSHPKGQQQRIRGFGKVLLAIQQGYGRSLNWALSHTRWVMVVLLSTIALNVWLYISIPKTFFPEQDTGRMMGFIQADQSISFQSMQQKLKDFMQIVGADPAVDSVTGFTGGSRTNSGSMFISLKPLSERQETAQQVITRLRGKLAKEPGANLFLSSVQDIRVGGRHSNAAYQFTLLADDLAALREWEPKVRAALAKLPQLADVNSDQQDKGAEMALTYDRETMARLGIDVSEANALLNNAFGQRQISTIYQPLNQYKVVMEVAPEYTQDVSSLDKMFVINSNGQSIPLSYFAKWQPANAPLAVNHQGLSAASTISFNLPDGGSLSEATAAVERAMTELGVPSTVRGAFAGTAQVFQETLKSQLWLIMAAIATVYIVLGILYESYVHPLTILSTLPSAGVGALLALELFDAPFSLIALIGIMLLIGIVKKNAIMMVDFALDAQRNGNISAREAIFQASLLRFRPIIMTTLAALFGALPLVLSSGDGAELRQPLGITIVGGLVVSQLLTLYTTPVIYLYFDRLRNRFSKQPLMKLE</sequence>
<feature type="chain" id="PRO_1000024322" description="Multidrug resistance protein MdtC">
    <location>
        <begin position="1"/>
        <end position="1024"/>
    </location>
</feature>
<feature type="transmembrane region" description="Helical" evidence="1">
    <location>
        <begin position="12"/>
        <end position="32"/>
    </location>
</feature>
<feature type="transmembrane region" description="Helical" evidence="1">
    <location>
        <begin position="333"/>
        <end position="353"/>
    </location>
</feature>
<feature type="transmembrane region" description="Helical" evidence="1">
    <location>
        <begin position="360"/>
        <end position="380"/>
    </location>
</feature>
<feature type="transmembrane region" description="Helical" evidence="1">
    <location>
        <begin position="387"/>
        <end position="407"/>
    </location>
</feature>
<feature type="transmembrane region" description="Helical" evidence="1">
    <location>
        <begin position="435"/>
        <end position="455"/>
    </location>
</feature>
<feature type="transmembrane region" description="Helical" evidence="1">
    <location>
        <begin position="469"/>
        <end position="489"/>
    </location>
</feature>
<feature type="transmembrane region" description="Helical" evidence="1">
    <location>
        <begin position="528"/>
        <end position="548"/>
    </location>
</feature>
<feature type="transmembrane region" description="Helical" evidence="1">
    <location>
        <begin position="853"/>
        <end position="873"/>
    </location>
</feature>
<feature type="transmembrane region" description="Helical" evidence="1">
    <location>
        <begin position="875"/>
        <end position="895"/>
    </location>
</feature>
<feature type="transmembrane region" description="Helical" evidence="1">
    <location>
        <begin position="897"/>
        <end position="917"/>
    </location>
</feature>
<feature type="transmembrane region" description="Helical" evidence="1">
    <location>
        <begin position="953"/>
        <end position="973"/>
    </location>
</feature>
<feature type="transmembrane region" description="Helical" evidence="1">
    <location>
        <begin position="984"/>
        <end position="1004"/>
    </location>
</feature>
<protein>
    <recommendedName>
        <fullName evidence="1">Multidrug resistance protein MdtC</fullName>
    </recommendedName>
    <alternativeName>
        <fullName evidence="1">Multidrug transporter MdtC</fullName>
    </alternativeName>
</protein>
<organism>
    <name type="scientific">Yersinia pestis bv. Antiqua (strain Nepal516)</name>
    <dbReference type="NCBI Taxonomy" id="377628"/>
    <lineage>
        <taxon>Bacteria</taxon>
        <taxon>Pseudomonadati</taxon>
        <taxon>Pseudomonadota</taxon>
        <taxon>Gammaproteobacteria</taxon>
        <taxon>Enterobacterales</taxon>
        <taxon>Yersiniaceae</taxon>
        <taxon>Yersinia</taxon>
    </lineage>
</organism>
<keyword id="KW-0997">Cell inner membrane</keyword>
<keyword id="KW-1003">Cell membrane</keyword>
<keyword id="KW-0472">Membrane</keyword>
<keyword id="KW-0812">Transmembrane</keyword>
<keyword id="KW-1133">Transmembrane helix</keyword>
<keyword id="KW-0813">Transport</keyword>
<reference key="1">
    <citation type="journal article" date="2006" name="J. Bacteriol.">
        <title>Complete genome sequence of Yersinia pestis strains Antiqua and Nepal516: evidence of gene reduction in an emerging pathogen.</title>
        <authorList>
            <person name="Chain P.S.G."/>
            <person name="Hu P."/>
            <person name="Malfatti S.A."/>
            <person name="Radnedge L."/>
            <person name="Larimer F."/>
            <person name="Vergez L.M."/>
            <person name="Worsham P."/>
            <person name="Chu M.C."/>
            <person name="Andersen G.L."/>
        </authorList>
    </citation>
    <scope>NUCLEOTIDE SEQUENCE [LARGE SCALE GENOMIC DNA]</scope>
    <source>
        <strain>Nepal516</strain>
    </source>
</reference>
<reference key="2">
    <citation type="submission" date="2009-04" db="EMBL/GenBank/DDBJ databases">
        <title>Yersinia pestis Nepal516A whole genome shotgun sequencing project.</title>
        <authorList>
            <person name="Plunkett G. III"/>
            <person name="Anderson B.D."/>
            <person name="Baumler D.J."/>
            <person name="Burland V."/>
            <person name="Cabot E.L."/>
            <person name="Glasner J.D."/>
            <person name="Mau B."/>
            <person name="Neeno-Eckwall E."/>
            <person name="Perna N.T."/>
            <person name="Munk A.C."/>
            <person name="Tapia R."/>
            <person name="Green L.D."/>
            <person name="Rogers Y.C."/>
            <person name="Detter J.C."/>
            <person name="Bruce D.C."/>
            <person name="Brettin T.S."/>
        </authorList>
    </citation>
    <scope>NUCLEOTIDE SEQUENCE [LARGE SCALE GENOMIC DNA]</scope>
    <source>
        <strain>Nepal516</strain>
    </source>
</reference>
<gene>
    <name evidence="1" type="primary">mdtC</name>
    <name type="ordered locus">YPN_1289</name>
    <name type="ORF">YP516_1419</name>
</gene>
<accession>Q1CK61</accession>
<accession>C4GRP3</accession>
<comment type="subunit">
    <text evidence="1">Part of a tripartite efflux system composed of MdtA, MdtB and MdtC. MdtC forms a heteromultimer with MdtB.</text>
</comment>
<comment type="subcellular location">
    <subcellularLocation>
        <location evidence="1">Cell inner membrane</location>
        <topology evidence="1">Multi-pass membrane protein</topology>
    </subcellularLocation>
</comment>
<comment type="similarity">
    <text evidence="1">Belongs to the resistance-nodulation-cell division (RND) (TC 2.A.6) family. MdtC subfamily.</text>
</comment>
<evidence type="ECO:0000255" key="1">
    <source>
        <dbReference type="HAMAP-Rule" id="MF_01424"/>
    </source>
</evidence>